<name>END4_CAMHC</name>
<gene>
    <name evidence="1" type="primary">nfo</name>
    <name type="ordered locus">CHAB381_0245</name>
</gene>
<keyword id="KW-0227">DNA damage</keyword>
<keyword id="KW-0234">DNA repair</keyword>
<keyword id="KW-0255">Endonuclease</keyword>
<keyword id="KW-0378">Hydrolase</keyword>
<keyword id="KW-0479">Metal-binding</keyword>
<keyword id="KW-0540">Nuclease</keyword>
<keyword id="KW-1185">Reference proteome</keyword>
<keyword id="KW-0862">Zinc</keyword>
<evidence type="ECO:0000255" key="1">
    <source>
        <dbReference type="HAMAP-Rule" id="MF_00152"/>
    </source>
</evidence>
<protein>
    <recommendedName>
        <fullName evidence="1">Probable endonuclease 4</fullName>
        <ecNumber evidence="1">3.1.21.2</ecNumber>
    </recommendedName>
    <alternativeName>
        <fullName evidence="1">Endodeoxyribonuclease IV</fullName>
    </alternativeName>
    <alternativeName>
        <fullName evidence="1">Endonuclease IV</fullName>
    </alternativeName>
</protein>
<accession>A7I010</accession>
<proteinExistence type="inferred from homology"/>
<reference key="1">
    <citation type="submission" date="2007-07" db="EMBL/GenBank/DDBJ databases">
        <title>Complete genome sequence of Campylobacter hominis ATCC BAA-381, a commensal isolated from the human gastrointestinal tract.</title>
        <authorList>
            <person name="Fouts D.E."/>
            <person name="Mongodin E.F."/>
            <person name="Puiu D."/>
            <person name="Sebastian Y."/>
            <person name="Miller W.G."/>
            <person name="Mandrell R.E."/>
            <person name="Nelson K.E."/>
        </authorList>
    </citation>
    <scope>NUCLEOTIDE SEQUENCE [LARGE SCALE GENOMIC DNA]</scope>
    <source>
        <strain>ATCC BAA-381 / DSM 21671 / CCUG 45161 / LMG 19568 / NCTC 13146 / CH001A</strain>
    </source>
</reference>
<comment type="function">
    <text evidence="1">Endonuclease IV plays a role in DNA repair. It cleaves phosphodiester bonds at apurinic or apyrimidinic (AP) sites, generating a 3'-hydroxyl group and a 5'-terminal sugar phosphate.</text>
</comment>
<comment type="catalytic activity">
    <reaction evidence="1">
        <text>Endonucleolytic cleavage to 5'-phosphooligonucleotide end-products.</text>
        <dbReference type="EC" id="3.1.21.2"/>
    </reaction>
</comment>
<comment type="cofactor">
    <cofactor evidence="1">
        <name>Zn(2+)</name>
        <dbReference type="ChEBI" id="CHEBI:29105"/>
    </cofactor>
    <text evidence="1">Binds 3 Zn(2+) ions.</text>
</comment>
<comment type="similarity">
    <text evidence="1">Belongs to the AP endonuclease 2 family.</text>
</comment>
<sequence length="282" mass="31685">MKRIGAHVSASGGVSNAPLNAAKIGADAFALFVKNQRQWSAKPLENQEIENFKQNLKISKILPEHILAHDSYLINLGHPNLQNRQKSLETFIDEINRCEILGIRLLNFHPGSHLKLISEQECLKNIAESINKALANTNRVKLVIENTAGQGSNLGYHFDQIAFIIKNVSDKSRIGVCIDTCHAFAGGYDFRTKAAYEKTMSEFDAKIGYKFLSGMHLNDTKNELGIRKDRHESLGKGFLGLESFENIMNDKNIDEIPMILETIDETIWPDEIKILRNLIKGN</sequence>
<dbReference type="EC" id="3.1.21.2" evidence="1"/>
<dbReference type="EMBL" id="CP000776">
    <property type="protein sequence ID" value="ABS51085.1"/>
    <property type="molecule type" value="Genomic_DNA"/>
</dbReference>
<dbReference type="RefSeq" id="WP_012108132.1">
    <property type="nucleotide sequence ID" value="NC_009714.1"/>
</dbReference>
<dbReference type="SMR" id="A7I010"/>
<dbReference type="STRING" id="360107.CHAB381_0245"/>
<dbReference type="KEGG" id="cha:CHAB381_0245"/>
<dbReference type="eggNOG" id="COG0648">
    <property type="taxonomic scope" value="Bacteria"/>
</dbReference>
<dbReference type="HOGENOM" id="CLU_025885_0_4_7"/>
<dbReference type="OrthoDB" id="9805666at2"/>
<dbReference type="Proteomes" id="UP000002407">
    <property type="component" value="Chromosome"/>
</dbReference>
<dbReference type="GO" id="GO:0008833">
    <property type="term" value="F:deoxyribonuclease IV (phage-T4-induced) activity"/>
    <property type="evidence" value="ECO:0007669"/>
    <property type="project" value="UniProtKB-UniRule"/>
</dbReference>
<dbReference type="GO" id="GO:0003677">
    <property type="term" value="F:DNA binding"/>
    <property type="evidence" value="ECO:0007669"/>
    <property type="project" value="InterPro"/>
</dbReference>
<dbReference type="GO" id="GO:0003906">
    <property type="term" value="F:DNA-(apurinic or apyrimidinic site) endonuclease activity"/>
    <property type="evidence" value="ECO:0007669"/>
    <property type="project" value="TreeGrafter"/>
</dbReference>
<dbReference type="GO" id="GO:0008081">
    <property type="term" value="F:phosphoric diester hydrolase activity"/>
    <property type="evidence" value="ECO:0007669"/>
    <property type="project" value="TreeGrafter"/>
</dbReference>
<dbReference type="GO" id="GO:0008270">
    <property type="term" value="F:zinc ion binding"/>
    <property type="evidence" value="ECO:0007669"/>
    <property type="project" value="UniProtKB-UniRule"/>
</dbReference>
<dbReference type="GO" id="GO:0006284">
    <property type="term" value="P:base-excision repair"/>
    <property type="evidence" value="ECO:0007669"/>
    <property type="project" value="TreeGrafter"/>
</dbReference>
<dbReference type="CDD" id="cd00019">
    <property type="entry name" value="AP2Ec"/>
    <property type="match status" value="1"/>
</dbReference>
<dbReference type="FunFam" id="3.20.20.150:FF:000001">
    <property type="entry name" value="Probable endonuclease 4"/>
    <property type="match status" value="1"/>
</dbReference>
<dbReference type="Gene3D" id="3.20.20.150">
    <property type="entry name" value="Divalent-metal-dependent TIM barrel enzymes"/>
    <property type="match status" value="1"/>
</dbReference>
<dbReference type="HAMAP" id="MF_00152">
    <property type="entry name" value="Nfo"/>
    <property type="match status" value="1"/>
</dbReference>
<dbReference type="InterPro" id="IPR001719">
    <property type="entry name" value="AP_endonuc_2"/>
</dbReference>
<dbReference type="InterPro" id="IPR018246">
    <property type="entry name" value="AP_endonuc_F2_Zn_BS"/>
</dbReference>
<dbReference type="InterPro" id="IPR036237">
    <property type="entry name" value="Xyl_isomerase-like_sf"/>
</dbReference>
<dbReference type="InterPro" id="IPR013022">
    <property type="entry name" value="Xyl_isomerase-like_TIM-brl"/>
</dbReference>
<dbReference type="NCBIfam" id="TIGR00587">
    <property type="entry name" value="nfo"/>
    <property type="match status" value="1"/>
</dbReference>
<dbReference type="NCBIfam" id="NF002199">
    <property type="entry name" value="PRK01060.1-4"/>
    <property type="match status" value="1"/>
</dbReference>
<dbReference type="PANTHER" id="PTHR21445:SF0">
    <property type="entry name" value="APURINIC-APYRIMIDINIC ENDONUCLEASE"/>
    <property type="match status" value="1"/>
</dbReference>
<dbReference type="PANTHER" id="PTHR21445">
    <property type="entry name" value="ENDONUCLEASE IV ENDODEOXYRIBONUCLEASE IV"/>
    <property type="match status" value="1"/>
</dbReference>
<dbReference type="Pfam" id="PF01261">
    <property type="entry name" value="AP_endonuc_2"/>
    <property type="match status" value="1"/>
</dbReference>
<dbReference type="SMART" id="SM00518">
    <property type="entry name" value="AP2Ec"/>
    <property type="match status" value="1"/>
</dbReference>
<dbReference type="SUPFAM" id="SSF51658">
    <property type="entry name" value="Xylose isomerase-like"/>
    <property type="match status" value="1"/>
</dbReference>
<dbReference type="PROSITE" id="PS00729">
    <property type="entry name" value="AP_NUCLEASE_F2_1"/>
    <property type="match status" value="1"/>
</dbReference>
<dbReference type="PROSITE" id="PS00730">
    <property type="entry name" value="AP_NUCLEASE_F2_2"/>
    <property type="match status" value="1"/>
</dbReference>
<dbReference type="PROSITE" id="PS51432">
    <property type="entry name" value="AP_NUCLEASE_F2_4"/>
    <property type="match status" value="1"/>
</dbReference>
<organism>
    <name type="scientific">Campylobacter hominis (strain ATCC BAA-381 / DSM 21671 / CCUG 45161 / LMG 19568 / NCTC 13146 / CH001A)</name>
    <dbReference type="NCBI Taxonomy" id="360107"/>
    <lineage>
        <taxon>Bacteria</taxon>
        <taxon>Pseudomonadati</taxon>
        <taxon>Campylobacterota</taxon>
        <taxon>Epsilonproteobacteria</taxon>
        <taxon>Campylobacterales</taxon>
        <taxon>Campylobacteraceae</taxon>
        <taxon>Campylobacter</taxon>
    </lineage>
</organism>
<feature type="chain" id="PRO_1000011296" description="Probable endonuclease 4">
    <location>
        <begin position="1"/>
        <end position="282"/>
    </location>
</feature>
<feature type="binding site" evidence="1">
    <location>
        <position position="69"/>
    </location>
    <ligand>
        <name>Zn(2+)</name>
        <dbReference type="ChEBI" id="CHEBI:29105"/>
        <label>1</label>
    </ligand>
</feature>
<feature type="binding site" evidence="1">
    <location>
        <position position="109"/>
    </location>
    <ligand>
        <name>Zn(2+)</name>
        <dbReference type="ChEBI" id="CHEBI:29105"/>
        <label>1</label>
    </ligand>
</feature>
<feature type="binding site" evidence="1">
    <location>
        <position position="145"/>
    </location>
    <ligand>
        <name>Zn(2+)</name>
        <dbReference type="ChEBI" id="CHEBI:29105"/>
        <label>1</label>
    </ligand>
</feature>
<feature type="binding site" evidence="1">
    <location>
        <position position="145"/>
    </location>
    <ligand>
        <name>Zn(2+)</name>
        <dbReference type="ChEBI" id="CHEBI:29105"/>
        <label>2</label>
    </ligand>
</feature>
<feature type="binding site" evidence="1">
    <location>
        <position position="179"/>
    </location>
    <ligand>
        <name>Zn(2+)</name>
        <dbReference type="ChEBI" id="CHEBI:29105"/>
        <label>2</label>
    </ligand>
</feature>
<feature type="binding site" evidence="1">
    <location>
        <position position="182"/>
    </location>
    <ligand>
        <name>Zn(2+)</name>
        <dbReference type="ChEBI" id="CHEBI:29105"/>
        <label>3</label>
    </ligand>
</feature>
<feature type="binding site" evidence="1">
    <location>
        <position position="216"/>
    </location>
    <ligand>
        <name>Zn(2+)</name>
        <dbReference type="ChEBI" id="CHEBI:29105"/>
        <label>2</label>
    </ligand>
</feature>
<feature type="binding site" evidence="1">
    <location>
        <position position="229"/>
    </location>
    <ligand>
        <name>Zn(2+)</name>
        <dbReference type="ChEBI" id="CHEBI:29105"/>
        <label>3</label>
    </ligand>
</feature>
<feature type="binding site" evidence="1">
    <location>
        <position position="231"/>
    </location>
    <ligand>
        <name>Zn(2+)</name>
        <dbReference type="ChEBI" id="CHEBI:29105"/>
        <label>3</label>
    </ligand>
</feature>
<feature type="binding site" evidence="1">
    <location>
        <position position="261"/>
    </location>
    <ligand>
        <name>Zn(2+)</name>
        <dbReference type="ChEBI" id="CHEBI:29105"/>
        <label>2</label>
    </ligand>
</feature>